<feature type="chain" id="PRO_0000242801" description="Thymidine kinase">
    <location>
        <begin position="1"/>
        <end position="197"/>
    </location>
</feature>
<feature type="active site" description="Proton acceptor" evidence="1">
    <location>
        <position position="84"/>
    </location>
</feature>
<feature type="binding site" evidence="1">
    <location>
        <begin position="9"/>
        <end position="16"/>
    </location>
    <ligand>
        <name>ATP</name>
        <dbReference type="ChEBI" id="CHEBI:30616"/>
    </ligand>
</feature>
<feature type="binding site" evidence="1">
    <location>
        <begin position="83"/>
        <end position="86"/>
    </location>
    <ligand>
        <name>ATP</name>
        <dbReference type="ChEBI" id="CHEBI:30616"/>
    </ligand>
</feature>
<feature type="binding site" evidence="1">
    <location>
        <position position="141"/>
    </location>
    <ligand>
        <name>Zn(2+)</name>
        <dbReference type="ChEBI" id="CHEBI:29105"/>
    </ligand>
</feature>
<feature type="binding site" evidence="1">
    <location>
        <position position="143"/>
    </location>
    <ligand>
        <name>Zn(2+)</name>
        <dbReference type="ChEBI" id="CHEBI:29105"/>
    </ligand>
</feature>
<feature type="binding site" evidence="1">
    <location>
        <position position="178"/>
    </location>
    <ligand>
        <name>Zn(2+)</name>
        <dbReference type="ChEBI" id="CHEBI:29105"/>
    </ligand>
</feature>
<feature type="binding site" evidence="1">
    <location>
        <position position="181"/>
    </location>
    <ligand>
        <name>Zn(2+)</name>
        <dbReference type="ChEBI" id="CHEBI:29105"/>
    </ligand>
</feature>
<comment type="catalytic activity">
    <reaction evidence="1">
        <text>thymidine + ATP = dTMP + ADP + H(+)</text>
        <dbReference type="Rhea" id="RHEA:19129"/>
        <dbReference type="ChEBI" id="CHEBI:15378"/>
        <dbReference type="ChEBI" id="CHEBI:17748"/>
        <dbReference type="ChEBI" id="CHEBI:30616"/>
        <dbReference type="ChEBI" id="CHEBI:63528"/>
        <dbReference type="ChEBI" id="CHEBI:456216"/>
        <dbReference type="EC" id="2.7.1.21"/>
    </reaction>
</comment>
<comment type="subunit">
    <text evidence="1">Homotetramer.</text>
</comment>
<comment type="subcellular location">
    <subcellularLocation>
        <location evidence="1">Cytoplasm</location>
    </subcellularLocation>
</comment>
<comment type="similarity">
    <text evidence="1">Belongs to the thymidine kinase family.</text>
</comment>
<organism>
    <name type="scientific">Albidiferax ferrireducens (strain ATCC BAA-621 / DSM 15236 / T118)</name>
    <name type="common">Rhodoferax ferrireducens</name>
    <dbReference type="NCBI Taxonomy" id="338969"/>
    <lineage>
        <taxon>Bacteria</taxon>
        <taxon>Pseudomonadati</taxon>
        <taxon>Pseudomonadota</taxon>
        <taxon>Betaproteobacteria</taxon>
        <taxon>Burkholderiales</taxon>
        <taxon>Comamonadaceae</taxon>
        <taxon>Rhodoferax</taxon>
    </lineage>
</organism>
<proteinExistence type="inferred from homology"/>
<accession>Q21Q74</accession>
<protein>
    <recommendedName>
        <fullName evidence="1">Thymidine kinase</fullName>
        <ecNumber evidence="1">2.7.1.21</ecNumber>
    </recommendedName>
</protein>
<dbReference type="EC" id="2.7.1.21" evidence="1"/>
<dbReference type="EMBL" id="CP000268">
    <property type="protein sequence ID" value="ABD72071.1"/>
    <property type="molecule type" value="Genomic_DNA"/>
</dbReference>
<dbReference type="RefSeq" id="WP_011458668.1">
    <property type="nucleotide sequence ID" value="NC_007901.1"/>
</dbReference>
<dbReference type="SMR" id="Q21Q74"/>
<dbReference type="KEGG" id="rfr:Rfer_4385"/>
<dbReference type="eggNOG" id="COG1435">
    <property type="taxonomic scope" value="Bacteria"/>
</dbReference>
<dbReference type="HOGENOM" id="CLU_064400_2_2_4"/>
<dbReference type="OrthoDB" id="9781579at2"/>
<dbReference type="Proteomes" id="UP000008332">
    <property type="component" value="Plasmid pDSM15236"/>
</dbReference>
<dbReference type="GO" id="GO:0005829">
    <property type="term" value="C:cytosol"/>
    <property type="evidence" value="ECO:0007669"/>
    <property type="project" value="TreeGrafter"/>
</dbReference>
<dbReference type="GO" id="GO:0005524">
    <property type="term" value="F:ATP binding"/>
    <property type="evidence" value="ECO:0007669"/>
    <property type="project" value="UniProtKB-UniRule"/>
</dbReference>
<dbReference type="GO" id="GO:0004797">
    <property type="term" value="F:thymidine kinase activity"/>
    <property type="evidence" value="ECO:0007669"/>
    <property type="project" value="UniProtKB-UniRule"/>
</dbReference>
<dbReference type="GO" id="GO:0008270">
    <property type="term" value="F:zinc ion binding"/>
    <property type="evidence" value="ECO:0007669"/>
    <property type="project" value="UniProtKB-UniRule"/>
</dbReference>
<dbReference type="GO" id="GO:0071897">
    <property type="term" value="P:DNA biosynthetic process"/>
    <property type="evidence" value="ECO:0007669"/>
    <property type="project" value="UniProtKB-KW"/>
</dbReference>
<dbReference type="GO" id="GO:0046104">
    <property type="term" value="P:thymidine metabolic process"/>
    <property type="evidence" value="ECO:0007669"/>
    <property type="project" value="TreeGrafter"/>
</dbReference>
<dbReference type="Gene3D" id="3.30.60.20">
    <property type="match status" value="1"/>
</dbReference>
<dbReference type="Gene3D" id="3.40.50.300">
    <property type="entry name" value="P-loop containing nucleotide triphosphate hydrolases"/>
    <property type="match status" value="1"/>
</dbReference>
<dbReference type="HAMAP" id="MF_00124">
    <property type="entry name" value="Thymidine_kinase"/>
    <property type="match status" value="1"/>
</dbReference>
<dbReference type="InterPro" id="IPR027417">
    <property type="entry name" value="P-loop_NTPase"/>
</dbReference>
<dbReference type="InterPro" id="IPR001267">
    <property type="entry name" value="Thymidine_kinase"/>
</dbReference>
<dbReference type="NCBIfam" id="NF003300">
    <property type="entry name" value="PRK04296.1-5"/>
    <property type="match status" value="1"/>
</dbReference>
<dbReference type="PANTHER" id="PTHR11441">
    <property type="entry name" value="THYMIDINE KINASE"/>
    <property type="match status" value="1"/>
</dbReference>
<dbReference type="PANTHER" id="PTHR11441:SF0">
    <property type="entry name" value="THYMIDINE KINASE, CYTOSOLIC"/>
    <property type="match status" value="1"/>
</dbReference>
<dbReference type="Pfam" id="PF00265">
    <property type="entry name" value="TK"/>
    <property type="match status" value="1"/>
</dbReference>
<dbReference type="PIRSF" id="PIRSF035805">
    <property type="entry name" value="TK_cell"/>
    <property type="match status" value="1"/>
</dbReference>
<dbReference type="SUPFAM" id="SSF57716">
    <property type="entry name" value="Glucocorticoid receptor-like (DNA-binding domain)"/>
    <property type="match status" value="1"/>
</dbReference>
<dbReference type="SUPFAM" id="SSF52540">
    <property type="entry name" value="P-loop containing nucleoside triphosphate hydrolases"/>
    <property type="match status" value="1"/>
</dbReference>
<name>KITH_ALBFT</name>
<sequence length="197" mass="21403">MSQLTFIFAAMNAGKSTLLLQAAHNYVERGMAVELYTAALDTRAGLGVIRSRLGIERGASTFNADTVFDHRILERDTACLLIDESQFLRPVQVRQLHRLAHTSQVPIRCYGLRSDFLGHPFAGSAALLTLADEFEEVRAVCGCGKKATMNARLDATGARVSAGEQTLIGGNERYIAMCPRCFYLDSAGEQDAQSTAA</sequence>
<reference key="1">
    <citation type="submission" date="2006-02" db="EMBL/GenBank/DDBJ databases">
        <title>Complete sequence of plasmid 1 of Rhodoferax ferrireducens DSM 15236.</title>
        <authorList>
            <person name="Copeland A."/>
            <person name="Lucas S."/>
            <person name="Lapidus A."/>
            <person name="Barry K."/>
            <person name="Detter J.C."/>
            <person name="Glavina del Rio T."/>
            <person name="Hammon N."/>
            <person name="Israni S."/>
            <person name="Pitluck S."/>
            <person name="Brettin T."/>
            <person name="Bruce D."/>
            <person name="Han C."/>
            <person name="Tapia R."/>
            <person name="Gilna P."/>
            <person name="Kiss H."/>
            <person name="Schmutz J."/>
            <person name="Larimer F."/>
            <person name="Land M."/>
            <person name="Kyrpides N."/>
            <person name="Ivanova N."/>
            <person name="Richardson P."/>
        </authorList>
    </citation>
    <scope>NUCLEOTIDE SEQUENCE [LARGE SCALE GENOMIC DNA]</scope>
    <source>
        <strain>ATCC BAA-621 / DSM 15236 / T118</strain>
    </source>
</reference>
<keyword id="KW-0067">ATP-binding</keyword>
<keyword id="KW-0963">Cytoplasm</keyword>
<keyword id="KW-0237">DNA synthesis</keyword>
<keyword id="KW-0418">Kinase</keyword>
<keyword id="KW-0479">Metal-binding</keyword>
<keyword id="KW-0547">Nucleotide-binding</keyword>
<keyword id="KW-0614">Plasmid</keyword>
<keyword id="KW-1185">Reference proteome</keyword>
<keyword id="KW-0808">Transferase</keyword>
<keyword id="KW-0862">Zinc</keyword>
<geneLocation type="plasmid">
    <name>plasmid1</name>
</geneLocation>
<evidence type="ECO:0000255" key="1">
    <source>
        <dbReference type="HAMAP-Rule" id="MF_00124"/>
    </source>
</evidence>
<gene>
    <name evidence="1" type="primary">tdk</name>
    <name type="ordered locus">Rfer_4385</name>
</gene>